<protein>
    <recommendedName>
        <fullName evidence="1">Glutamate 5-kinase</fullName>
        <ecNumber evidence="1">2.7.2.11</ecNumber>
    </recommendedName>
    <alternativeName>
        <fullName evidence="1">Gamma-glutamyl kinase</fullName>
        <shortName evidence="1">GK</shortName>
    </alternativeName>
</protein>
<organism>
    <name type="scientific">Aquifex aeolicus (strain VF5)</name>
    <dbReference type="NCBI Taxonomy" id="224324"/>
    <lineage>
        <taxon>Bacteria</taxon>
        <taxon>Pseudomonadati</taxon>
        <taxon>Aquificota</taxon>
        <taxon>Aquificia</taxon>
        <taxon>Aquificales</taxon>
        <taxon>Aquificaceae</taxon>
        <taxon>Aquifex</taxon>
    </lineage>
</organism>
<feature type="chain" id="PRO_0000109630" description="Glutamate 5-kinase">
    <location>
        <begin position="1"/>
        <end position="356"/>
    </location>
</feature>
<feature type="domain" description="PUA" evidence="1">
    <location>
        <begin position="265"/>
        <end position="342"/>
    </location>
</feature>
<feature type="binding site" evidence="1">
    <location>
        <position position="6"/>
    </location>
    <ligand>
        <name>ATP</name>
        <dbReference type="ChEBI" id="CHEBI:30616"/>
    </ligand>
</feature>
<feature type="binding site" evidence="1">
    <location>
        <position position="46"/>
    </location>
    <ligand>
        <name>substrate</name>
    </ligand>
</feature>
<feature type="binding site" evidence="1">
    <location>
        <position position="135"/>
    </location>
    <ligand>
        <name>substrate</name>
    </ligand>
</feature>
<feature type="binding site" evidence="1">
    <location>
        <position position="147"/>
    </location>
    <ligand>
        <name>substrate</name>
    </ligand>
</feature>
<feature type="binding site" evidence="1">
    <location>
        <begin position="202"/>
        <end position="208"/>
    </location>
    <ligand>
        <name>ATP</name>
        <dbReference type="ChEBI" id="CHEBI:30616"/>
    </ligand>
</feature>
<dbReference type="EC" id="2.7.2.11" evidence="1"/>
<dbReference type="EMBL" id="AE000657">
    <property type="protein sequence ID" value="AAC07171.1"/>
    <property type="molecule type" value="Genomic_DNA"/>
</dbReference>
<dbReference type="PIR" id="F70397">
    <property type="entry name" value="F70397"/>
</dbReference>
<dbReference type="RefSeq" id="NP_213773.1">
    <property type="nucleotide sequence ID" value="NC_000918.1"/>
</dbReference>
<dbReference type="RefSeq" id="WP_010880711.1">
    <property type="nucleotide sequence ID" value="NC_000918.1"/>
</dbReference>
<dbReference type="SMR" id="O67209"/>
<dbReference type="FunCoup" id="O67209">
    <property type="interactions" value="337"/>
</dbReference>
<dbReference type="STRING" id="224324.aq_1134"/>
<dbReference type="DNASU" id="1192555"/>
<dbReference type="EnsemblBacteria" id="AAC07171">
    <property type="protein sequence ID" value="AAC07171"/>
    <property type="gene ID" value="aq_1134"/>
</dbReference>
<dbReference type="KEGG" id="aae:aq_1134"/>
<dbReference type="PATRIC" id="fig|224324.8.peg.884"/>
<dbReference type="eggNOG" id="COG0263">
    <property type="taxonomic scope" value="Bacteria"/>
</dbReference>
<dbReference type="HOGENOM" id="CLU_025400_2_0_0"/>
<dbReference type="InParanoid" id="O67209"/>
<dbReference type="OrthoDB" id="9804434at2"/>
<dbReference type="UniPathway" id="UPA00098">
    <property type="reaction ID" value="UER00359"/>
</dbReference>
<dbReference type="Proteomes" id="UP000000798">
    <property type="component" value="Chromosome"/>
</dbReference>
<dbReference type="GO" id="GO:0005829">
    <property type="term" value="C:cytosol"/>
    <property type="evidence" value="ECO:0000318"/>
    <property type="project" value="GO_Central"/>
</dbReference>
<dbReference type="GO" id="GO:0005524">
    <property type="term" value="F:ATP binding"/>
    <property type="evidence" value="ECO:0007669"/>
    <property type="project" value="UniProtKB-KW"/>
</dbReference>
<dbReference type="GO" id="GO:0004349">
    <property type="term" value="F:glutamate 5-kinase activity"/>
    <property type="evidence" value="ECO:0000318"/>
    <property type="project" value="GO_Central"/>
</dbReference>
<dbReference type="GO" id="GO:0003723">
    <property type="term" value="F:RNA binding"/>
    <property type="evidence" value="ECO:0007669"/>
    <property type="project" value="InterPro"/>
</dbReference>
<dbReference type="GO" id="GO:0055129">
    <property type="term" value="P:L-proline biosynthetic process"/>
    <property type="evidence" value="ECO:0007669"/>
    <property type="project" value="UniProtKB-UniRule"/>
</dbReference>
<dbReference type="GO" id="GO:0006561">
    <property type="term" value="P:proline biosynthetic process"/>
    <property type="evidence" value="ECO:0000318"/>
    <property type="project" value="GO_Central"/>
</dbReference>
<dbReference type="CDD" id="cd04242">
    <property type="entry name" value="AAK_G5K_ProB"/>
    <property type="match status" value="1"/>
</dbReference>
<dbReference type="CDD" id="cd21157">
    <property type="entry name" value="PUA_G5K"/>
    <property type="match status" value="1"/>
</dbReference>
<dbReference type="FunFam" id="2.30.130.10:FF:000007">
    <property type="entry name" value="Glutamate 5-kinase"/>
    <property type="match status" value="1"/>
</dbReference>
<dbReference type="FunFam" id="3.40.1160.10:FF:000040">
    <property type="entry name" value="Glutamate 5-kinase"/>
    <property type="match status" value="1"/>
</dbReference>
<dbReference type="Gene3D" id="3.40.1160.10">
    <property type="entry name" value="Acetylglutamate kinase-like"/>
    <property type="match status" value="1"/>
</dbReference>
<dbReference type="Gene3D" id="2.30.130.10">
    <property type="entry name" value="PUA domain"/>
    <property type="match status" value="1"/>
</dbReference>
<dbReference type="HAMAP" id="MF_00456">
    <property type="entry name" value="ProB"/>
    <property type="match status" value="1"/>
</dbReference>
<dbReference type="InterPro" id="IPR036393">
    <property type="entry name" value="AceGlu_kinase-like_sf"/>
</dbReference>
<dbReference type="InterPro" id="IPR001048">
    <property type="entry name" value="Asp/Glu/Uridylate_kinase"/>
</dbReference>
<dbReference type="InterPro" id="IPR041739">
    <property type="entry name" value="G5K_ProB"/>
</dbReference>
<dbReference type="InterPro" id="IPR001057">
    <property type="entry name" value="Glu/AcGlu_kinase"/>
</dbReference>
<dbReference type="InterPro" id="IPR011529">
    <property type="entry name" value="Glu_5kinase"/>
</dbReference>
<dbReference type="InterPro" id="IPR005715">
    <property type="entry name" value="Glu_5kinase/COase_Synthase"/>
</dbReference>
<dbReference type="InterPro" id="IPR019797">
    <property type="entry name" value="Glutamate_5-kinase_CS"/>
</dbReference>
<dbReference type="InterPro" id="IPR002478">
    <property type="entry name" value="PUA"/>
</dbReference>
<dbReference type="InterPro" id="IPR015947">
    <property type="entry name" value="PUA-like_sf"/>
</dbReference>
<dbReference type="InterPro" id="IPR036974">
    <property type="entry name" value="PUA_sf"/>
</dbReference>
<dbReference type="InterPro" id="IPR004521">
    <property type="entry name" value="Uncharacterised_CHP00451"/>
</dbReference>
<dbReference type="NCBIfam" id="TIGR01027">
    <property type="entry name" value="proB"/>
    <property type="match status" value="1"/>
</dbReference>
<dbReference type="NCBIfam" id="TIGR00451">
    <property type="entry name" value="unchar_dom_2"/>
    <property type="match status" value="1"/>
</dbReference>
<dbReference type="PANTHER" id="PTHR43654">
    <property type="entry name" value="GLUTAMATE 5-KINASE"/>
    <property type="match status" value="1"/>
</dbReference>
<dbReference type="PANTHER" id="PTHR43654:SF1">
    <property type="entry name" value="ISOPENTENYL PHOSPHATE KINASE"/>
    <property type="match status" value="1"/>
</dbReference>
<dbReference type="Pfam" id="PF00696">
    <property type="entry name" value="AA_kinase"/>
    <property type="match status" value="1"/>
</dbReference>
<dbReference type="Pfam" id="PF01472">
    <property type="entry name" value="PUA"/>
    <property type="match status" value="1"/>
</dbReference>
<dbReference type="PIRSF" id="PIRSF000729">
    <property type="entry name" value="GK"/>
    <property type="match status" value="1"/>
</dbReference>
<dbReference type="PRINTS" id="PR00474">
    <property type="entry name" value="GLU5KINASE"/>
</dbReference>
<dbReference type="SMART" id="SM00359">
    <property type="entry name" value="PUA"/>
    <property type="match status" value="1"/>
</dbReference>
<dbReference type="SUPFAM" id="SSF53633">
    <property type="entry name" value="Carbamate kinase-like"/>
    <property type="match status" value="1"/>
</dbReference>
<dbReference type="SUPFAM" id="SSF88697">
    <property type="entry name" value="PUA domain-like"/>
    <property type="match status" value="1"/>
</dbReference>
<dbReference type="PROSITE" id="PS00902">
    <property type="entry name" value="GLUTAMATE_5_KINASE"/>
    <property type="match status" value="1"/>
</dbReference>
<dbReference type="PROSITE" id="PS50890">
    <property type="entry name" value="PUA"/>
    <property type="match status" value="1"/>
</dbReference>
<gene>
    <name evidence="1" type="primary">proB</name>
    <name type="ordered locus">aq_1134</name>
</gene>
<name>PROB_AQUAE</name>
<reference key="1">
    <citation type="journal article" date="1998" name="Nature">
        <title>The complete genome of the hyperthermophilic bacterium Aquifex aeolicus.</title>
        <authorList>
            <person name="Deckert G."/>
            <person name="Warren P.V."/>
            <person name="Gaasterland T."/>
            <person name="Young W.G."/>
            <person name="Lenox A.L."/>
            <person name="Graham D.E."/>
            <person name="Overbeek R."/>
            <person name="Snead M.A."/>
            <person name="Keller M."/>
            <person name="Aujay M."/>
            <person name="Huber R."/>
            <person name="Feldman R.A."/>
            <person name="Short J.M."/>
            <person name="Olsen G.J."/>
            <person name="Swanson R.V."/>
        </authorList>
    </citation>
    <scope>NUCLEOTIDE SEQUENCE [LARGE SCALE GENOMIC DNA]</scope>
    <source>
        <strain>VF5</strain>
    </source>
</reference>
<proteinExistence type="inferred from homology"/>
<comment type="function">
    <text evidence="1">Catalyzes the transfer of a phosphate group to glutamate to form L-glutamate 5-phosphate.</text>
</comment>
<comment type="catalytic activity">
    <reaction evidence="1">
        <text>L-glutamate + ATP = L-glutamyl 5-phosphate + ADP</text>
        <dbReference type="Rhea" id="RHEA:14877"/>
        <dbReference type="ChEBI" id="CHEBI:29985"/>
        <dbReference type="ChEBI" id="CHEBI:30616"/>
        <dbReference type="ChEBI" id="CHEBI:58274"/>
        <dbReference type="ChEBI" id="CHEBI:456216"/>
        <dbReference type="EC" id="2.7.2.11"/>
    </reaction>
</comment>
<comment type="pathway">
    <text evidence="1">Amino-acid biosynthesis; L-proline biosynthesis; L-glutamate 5-semialdehyde from L-glutamate: step 1/2.</text>
</comment>
<comment type="subcellular location">
    <subcellularLocation>
        <location evidence="1">Cytoplasm</location>
    </subcellularLocation>
</comment>
<comment type="similarity">
    <text evidence="1">Belongs to the glutamate 5-kinase family.</text>
</comment>
<accession>O67209</accession>
<evidence type="ECO:0000255" key="1">
    <source>
        <dbReference type="HAMAP-Rule" id="MF_00456"/>
    </source>
</evidence>
<sequence>MRIVFKIGSNLLETDEGDIDLSFLSKLAEGIKKLHSFGDKVLIVSSGAVLSGAKKLGIKEKPKDLTLKQALASVGQSYLMHLYDTIFSNYGLKVGQVLLTKDVFSKEKEERFKNAKSTLEKLLELGVVPVINENDAVAVEELVFGDNDFLAVYVSFMVNADLLVIFSSAGGLKDDKDRIIPVVEDIEKVFKYVRGTGTSFGTGGMRSKLEATRLATTLNIPVIITSKEENILDLRNLKTKGTLFKPSKRKLRNALKVIATLEEPKGIIVVDRGAQEALKAGKSLLPAGVVSVQGNFKRGDVVSIQNEEGLIIGKGKVNFSSEEIEKIKGLKTSEVRKLLNTTKDEVIHRDNMVIFL</sequence>
<keyword id="KW-0028">Amino-acid biosynthesis</keyword>
<keyword id="KW-0067">ATP-binding</keyword>
<keyword id="KW-0963">Cytoplasm</keyword>
<keyword id="KW-0418">Kinase</keyword>
<keyword id="KW-0547">Nucleotide-binding</keyword>
<keyword id="KW-0641">Proline biosynthesis</keyword>
<keyword id="KW-1185">Reference proteome</keyword>
<keyword id="KW-0808">Transferase</keyword>